<accession>P79154</accession>
<accession>Q53ZM6</accession>
<accession>Q6E219</accession>
<comment type="function">
    <text evidence="2 3">Type II interferon produced by immune cells such as T-cells and NK cells that plays crucial roles in antimicrobial, antiviral, and antitumor responses by activating effector immune cells and enhancing antigen presentation. Primarily signals through the JAK-STAT pathway after interaction with its receptor IFNGR1 to affect gene regulation. Upon IFNG binding, IFNGR1 intracellular domain opens out to allow association of downstream signaling components JAK2, JAK1 and STAT1, leading to STAT1 activation, nuclear translocation and transcription of IFNG-regulated genes. Many of the induced genes are transcription factors such as IRF1 that are able to further drive regulation of a next wave of transcription. Plays a role in class I antigen presentation pathway by inducing a replacement of catalytic proteasome subunits with immunoproteasome subunits. In turn, increases the quantity, quality, and repertoire of peptides for class I MHC loading. Increases the efficiency of peptide generation also by inducing the expression of activator PA28 that associates with the proteasome and alters its proteolytic cleavage preference. Up-regulates as well MHC II complexes on the cell surface by promoting expression of several key molecules such as cathepsins B/CTSB, H/CTSH, and L/CTSL (By similarity). Participates in the regulation of hematopoietic stem cells during development and under homeostatic conditions by affecting their development, quiescence, and differentiation (By similarity).</text>
</comment>
<comment type="subunit">
    <text evidence="2">Homodimer. Interacts with IFNGR1 (via extracellular domain); this interaction promotes IFNGR1 dimerization.</text>
</comment>
<comment type="subcellular location">
    <subcellularLocation>
        <location evidence="2">Secreted</location>
    </subcellularLocation>
</comment>
<comment type="tissue specificity">
    <text>Released primarily from activated T lymphocytes.</text>
</comment>
<comment type="similarity">
    <text evidence="5">Belongs to the type II (or gamma) interferon family.</text>
</comment>
<sequence length="166" mass="19325">MKYTSSFLALLLSVLLGFSGSYGQGPFFKEIENLKEYFNASNPDVAKGGPLFSEILKNWKEESDKKIIQSQIVSFYFKLFENLKDNQVIQRSMDIIKQDMFQKFLNGSSEKLEDFKKLIQIPVDDLQIQRKAINELIKVMNDLSPKSNLRKRKRSQNLFRGRRASM</sequence>
<protein>
    <recommendedName>
        <fullName>Interferon gamma</fullName>
        <shortName>IFN-gamma</shortName>
    </recommendedName>
</protein>
<organism>
    <name type="scientific">Capra hircus</name>
    <name type="common">Goat</name>
    <dbReference type="NCBI Taxonomy" id="9925"/>
    <lineage>
        <taxon>Eukaryota</taxon>
        <taxon>Metazoa</taxon>
        <taxon>Chordata</taxon>
        <taxon>Craniata</taxon>
        <taxon>Vertebrata</taxon>
        <taxon>Euteleostomi</taxon>
        <taxon>Mammalia</taxon>
        <taxon>Eutheria</taxon>
        <taxon>Laurasiatheria</taxon>
        <taxon>Artiodactyla</taxon>
        <taxon>Ruminantia</taxon>
        <taxon>Pecora</taxon>
        <taxon>Bovidae</taxon>
        <taxon>Caprinae</taxon>
        <taxon>Capra</taxon>
    </lineage>
</organism>
<keyword id="KW-0051">Antiviral defense</keyword>
<keyword id="KW-0202">Cytokine</keyword>
<keyword id="KW-0325">Glycoprotein</keyword>
<keyword id="KW-0341">Growth regulation</keyword>
<keyword id="KW-0873">Pyrrolidone carboxylic acid</keyword>
<keyword id="KW-1185">Reference proteome</keyword>
<keyword id="KW-0964">Secreted</keyword>
<keyword id="KW-0732">Signal</keyword>
<reference key="1">
    <citation type="journal article" date="1998" name="Gene">
        <title>Cloning and expression of caprine interferon-gamma.</title>
        <authorList>
            <person name="Beyer J.C."/>
            <person name="Stich R.W."/>
            <person name="Hoover D.S."/>
            <person name="Brown W.C."/>
            <person name="Cheevers W.P."/>
        </authorList>
    </citation>
    <scope>NUCLEOTIDE SEQUENCE [MRNA]</scope>
</reference>
<reference key="2">
    <citation type="submission" date="2003-05" db="EMBL/GenBank/DDBJ databases">
        <authorList>
            <person name="Wei X.F."/>
            <person name="Li C.H."/>
            <person name="Xu L.X."/>
            <person name="Li X.R."/>
        </authorList>
    </citation>
    <scope>NUCLEOTIDE SEQUENCE [MRNA]</scope>
</reference>
<reference key="3">
    <citation type="submission" date="2004-04" db="EMBL/GenBank/DDBJ databases">
        <title>Cloning and sequencing of goat cytokines.</title>
        <authorList>
            <person name="Rasool T.J."/>
            <person name="Shebannavar S."/>
            <person name="Hosamani M."/>
        </authorList>
    </citation>
    <scope>NUCLEOTIDE SEQUENCE [MRNA]</scope>
</reference>
<dbReference type="EMBL" id="U34232">
    <property type="protein sequence ID" value="AAB38525.1"/>
    <property type="molecule type" value="mRNA"/>
</dbReference>
<dbReference type="EMBL" id="AY304501">
    <property type="protein sequence ID" value="AAP68800.1"/>
    <property type="molecule type" value="mRNA"/>
</dbReference>
<dbReference type="EMBL" id="AY603405">
    <property type="protein sequence ID" value="AAT72315.1"/>
    <property type="molecule type" value="mRNA"/>
</dbReference>
<dbReference type="RefSeq" id="NP_001272611.1">
    <property type="nucleotide sequence ID" value="NM_001285682.1"/>
</dbReference>
<dbReference type="SMR" id="P79154"/>
<dbReference type="STRING" id="9925.ENSCHIP00000016152"/>
<dbReference type="GlyCosmos" id="P79154">
    <property type="glycosylation" value="2 sites, No reported glycans"/>
</dbReference>
<dbReference type="Ensembl" id="ENSCHIT00010004687.1">
    <property type="protein sequence ID" value="ENSCHIP00010003378.1"/>
    <property type="gene ID" value="ENSCHIG00010002434.1"/>
</dbReference>
<dbReference type="Ensembl" id="ENSCHIT00040009120">
    <property type="protein sequence ID" value="ENSCHIP00040007205"/>
    <property type="gene ID" value="ENSCHIG00040004212"/>
</dbReference>
<dbReference type="GeneID" id="100860815"/>
<dbReference type="KEGG" id="chx:100860815"/>
<dbReference type="CTD" id="3458"/>
<dbReference type="OrthoDB" id="9937106at2759"/>
<dbReference type="Proteomes" id="UP000291000">
    <property type="component" value="Unplaced"/>
</dbReference>
<dbReference type="Proteomes" id="UP000694566">
    <property type="component" value="Chromosome 5"/>
</dbReference>
<dbReference type="GO" id="GO:0005615">
    <property type="term" value="C:extracellular space"/>
    <property type="evidence" value="ECO:0007669"/>
    <property type="project" value="UniProtKB-KW"/>
</dbReference>
<dbReference type="GO" id="GO:0005125">
    <property type="term" value="F:cytokine activity"/>
    <property type="evidence" value="ECO:0007669"/>
    <property type="project" value="UniProtKB-KW"/>
</dbReference>
<dbReference type="GO" id="GO:0005133">
    <property type="term" value="F:type II interferon receptor binding"/>
    <property type="evidence" value="ECO:0007669"/>
    <property type="project" value="InterPro"/>
</dbReference>
<dbReference type="GO" id="GO:0002250">
    <property type="term" value="P:adaptive immune response"/>
    <property type="evidence" value="ECO:0007669"/>
    <property type="project" value="TreeGrafter"/>
</dbReference>
<dbReference type="GO" id="GO:0051607">
    <property type="term" value="P:defense response to virus"/>
    <property type="evidence" value="ECO:0007669"/>
    <property type="project" value="UniProtKB-KW"/>
</dbReference>
<dbReference type="GO" id="GO:0006959">
    <property type="term" value="P:humoral immune response"/>
    <property type="evidence" value="ECO:0007669"/>
    <property type="project" value="TreeGrafter"/>
</dbReference>
<dbReference type="GO" id="GO:0010508">
    <property type="term" value="P:positive regulation of autophagy"/>
    <property type="evidence" value="ECO:0000250"/>
    <property type="project" value="UniProtKB"/>
</dbReference>
<dbReference type="FunFam" id="1.20.1250.10:FF:000080">
    <property type="entry name" value="Interferon gamma"/>
    <property type="match status" value="1"/>
</dbReference>
<dbReference type="Gene3D" id="1.20.1250.10">
    <property type="match status" value="1"/>
</dbReference>
<dbReference type="InterPro" id="IPR009079">
    <property type="entry name" value="4_helix_cytokine-like_core"/>
</dbReference>
<dbReference type="InterPro" id="IPR002069">
    <property type="entry name" value="Interferon_gamma"/>
</dbReference>
<dbReference type="PANTHER" id="PTHR11419">
    <property type="entry name" value="INTERFERON GAMMA"/>
    <property type="match status" value="1"/>
</dbReference>
<dbReference type="PANTHER" id="PTHR11419:SF0">
    <property type="entry name" value="INTERFERON GAMMA"/>
    <property type="match status" value="1"/>
</dbReference>
<dbReference type="Pfam" id="PF00714">
    <property type="entry name" value="IFN-gamma"/>
    <property type="match status" value="1"/>
</dbReference>
<dbReference type="PIRSF" id="PIRSF001936">
    <property type="entry name" value="IFN-gamma"/>
    <property type="match status" value="1"/>
</dbReference>
<dbReference type="SUPFAM" id="SSF47266">
    <property type="entry name" value="4-helical cytokines"/>
    <property type="match status" value="1"/>
</dbReference>
<proteinExistence type="evidence at transcript level"/>
<evidence type="ECO:0000250" key="1"/>
<evidence type="ECO:0000250" key="2">
    <source>
        <dbReference type="UniProtKB" id="P01579"/>
    </source>
</evidence>
<evidence type="ECO:0000250" key="3">
    <source>
        <dbReference type="UniProtKB" id="P01580"/>
    </source>
</evidence>
<evidence type="ECO:0000255" key="4"/>
<evidence type="ECO:0000305" key="5"/>
<name>IFNG_CAPHI</name>
<gene>
    <name type="primary">IFNG</name>
</gene>
<feature type="signal peptide" evidence="1">
    <location>
        <begin position="1"/>
        <end position="23"/>
    </location>
</feature>
<feature type="chain" id="PRO_0000016438" description="Interferon gamma">
    <location>
        <begin position="24"/>
        <end position="166"/>
    </location>
</feature>
<feature type="modified residue" description="Pyrrolidone carboxylic acid" evidence="2">
    <location>
        <position position="24"/>
    </location>
</feature>
<feature type="glycosylation site" description="N-linked (GlcNAc...) asparagine" evidence="4">
    <location>
        <position position="39"/>
    </location>
</feature>
<feature type="glycosylation site" description="N-linked (GlcNAc...) asparagine" evidence="4">
    <location>
        <position position="106"/>
    </location>
</feature>
<feature type="sequence conflict" description="In Ref. 3; AAT72315." evidence="5" ref="3">
    <original>N</original>
    <variation>T</variation>
    <location>
        <position position="33"/>
    </location>
</feature>